<name>ORN_MYCLE</name>
<proteinExistence type="inferred from homology"/>
<comment type="function">
    <text evidence="1">3'-to-5' exoribonuclease specific for small oligoribonucleotides.</text>
</comment>
<comment type="subcellular location">
    <subcellularLocation>
        <location evidence="1">Cytoplasm</location>
    </subcellularLocation>
</comment>
<comment type="similarity">
    <text evidence="1">Belongs to the oligoribonuclease family.</text>
</comment>
<accession>O07708</accession>
<keyword id="KW-0963">Cytoplasm</keyword>
<keyword id="KW-0269">Exonuclease</keyword>
<keyword id="KW-0378">Hydrolase</keyword>
<keyword id="KW-0540">Nuclease</keyword>
<keyword id="KW-1185">Reference proteome</keyword>
<evidence type="ECO:0000255" key="1">
    <source>
        <dbReference type="HAMAP-Rule" id="MF_00045"/>
    </source>
</evidence>
<gene>
    <name evidence="1" type="primary">orn</name>
    <name type="ordered locus">ML0427</name>
    <name type="ORF">MLCL383.34c</name>
</gene>
<dbReference type="EC" id="3.1.15.-" evidence="1"/>
<dbReference type="EMBL" id="Z97179">
    <property type="protein sequence ID" value="CAB09908.1"/>
    <property type="molecule type" value="Genomic_DNA"/>
</dbReference>
<dbReference type="EMBL" id="AL583918">
    <property type="protein sequence ID" value="CAC29935.1"/>
    <property type="molecule type" value="Genomic_DNA"/>
</dbReference>
<dbReference type="PIR" id="C86962">
    <property type="entry name" value="C86962"/>
</dbReference>
<dbReference type="RefSeq" id="NP_301398.1">
    <property type="nucleotide sequence ID" value="NC_002677.1"/>
</dbReference>
<dbReference type="RefSeq" id="WP_010907722.1">
    <property type="nucleotide sequence ID" value="NC_002677.1"/>
</dbReference>
<dbReference type="SMR" id="O07708"/>
<dbReference type="STRING" id="272631.gene:17574248"/>
<dbReference type="KEGG" id="mle:ML0427"/>
<dbReference type="PATRIC" id="fig|272631.5.peg.738"/>
<dbReference type="Leproma" id="ML0427"/>
<dbReference type="eggNOG" id="COG1949">
    <property type="taxonomic scope" value="Bacteria"/>
</dbReference>
<dbReference type="HOGENOM" id="CLU_064761_3_0_11"/>
<dbReference type="OrthoDB" id="9801329at2"/>
<dbReference type="Proteomes" id="UP000000806">
    <property type="component" value="Chromosome"/>
</dbReference>
<dbReference type="GO" id="GO:0005737">
    <property type="term" value="C:cytoplasm"/>
    <property type="evidence" value="ECO:0007669"/>
    <property type="project" value="UniProtKB-SubCell"/>
</dbReference>
<dbReference type="GO" id="GO:0000175">
    <property type="term" value="F:3'-5'-RNA exonuclease activity"/>
    <property type="evidence" value="ECO:0007669"/>
    <property type="project" value="InterPro"/>
</dbReference>
<dbReference type="GO" id="GO:0003676">
    <property type="term" value="F:nucleic acid binding"/>
    <property type="evidence" value="ECO:0007669"/>
    <property type="project" value="InterPro"/>
</dbReference>
<dbReference type="CDD" id="cd06135">
    <property type="entry name" value="Orn"/>
    <property type="match status" value="1"/>
</dbReference>
<dbReference type="FunFam" id="3.30.420.10:FF:000003">
    <property type="entry name" value="Oligoribonuclease"/>
    <property type="match status" value="1"/>
</dbReference>
<dbReference type="Gene3D" id="3.30.420.10">
    <property type="entry name" value="Ribonuclease H-like superfamily/Ribonuclease H"/>
    <property type="match status" value="1"/>
</dbReference>
<dbReference type="HAMAP" id="MF_00045">
    <property type="entry name" value="Oligoribonuclease"/>
    <property type="match status" value="1"/>
</dbReference>
<dbReference type="InterPro" id="IPR013520">
    <property type="entry name" value="Exonuclease_RNaseT/DNA_pol3"/>
</dbReference>
<dbReference type="InterPro" id="IPR022894">
    <property type="entry name" value="Oligoribonuclease"/>
</dbReference>
<dbReference type="InterPro" id="IPR012337">
    <property type="entry name" value="RNaseH-like_sf"/>
</dbReference>
<dbReference type="InterPro" id="IPR036397">
    <property type="entry name" value="RNaseH_sf"/>
</dbReference>
<dbReference type="NCBIfam" id="NF003765">
    <property type="entry name" value="PRK05359.1"/>
    <property type="match status" value="1"/>
</dbReference>
<dbReference type="PANTHER" id="PTHR11046">
    <property type="entry name" value="OLIGORIBONUCLEASE, MITOCHONDRIAL"/>
    <property type="match status" value="1"/>
</dbReference>
<dbReference type="PANTHER" id="PTHR11046:SF0">
    <property type="entry name" value="OLIGORIBONUCLEASE, MITOCHONDRIAL"/>
    <property type="match status" value="1"/>
</dbReference>
<dbReference type="Pfam" id="PF00929">
    <property type="entry name" value="RNase_T"/>
    <property type="match status" value="1"/>
</dbReference>
<dbReference type="SMART" id="SM00479">
    <property type="entry name" value="EXOIII"/>
    <property type="match status" value="1"/>
</dbReference>
<dbReference type="SUPFAM" id="SSF53098">
    <property type="entry name" value="Ribonuclease H-like"/>
    <property type="match status" value="1"/>
</dbReference>
<sequence length="215" mass="23717">MHDELVWIDCEMTGLDLGSDQLIEIAALVTDADLNILGDGVDVVIHIDSTALSSMIDVVAEMHSRSGLINEVESSIVDLVTAESIVLDYINNHVKQPKTAPLAGNSIATDRSFIARDMPTLDSFLHYRMIDVSSIKELCRRWYPRIYFGQPAKGLTHRALADIHESIRELRFYRRTAFVPPPGPSTREIAEVVADLSGTPATPGDIDSAYERPNG</sequence>
<feature type="chain" id="PRO_0000111049" description="Oligoribonuclease">
    <location>
        <begin position="1"/>
        <end position="215"/>
    </location>
</feature>
<feature type="domain" description="Exonuclease" evidence="1">
    <location>
        <begin position="5"/>
        <end position="170"/>
    </location>
</feature>
<feature type="active site" evidence="1">
    <location>
        <position position="127"/>
    </location>
</feature>
<protein>
    <recommendedName>
        <fullName evidence="1">Oligoribonuclease</fullName>
        <ecNumber evidence="1">3.1.15.-</ecNumber>
    </recommendedName>
</protein>
<organism>
    <name type="scientific">Mycobacterium leprae (strain TN)</name>
    <dbReference type="NCBI Taxonomy" id="272631"/>
    <lineage>
        <taxon>Bacteria</taxon>
        <taxon>Bacillati</taxon>
        <taxon>Actinomycetota</taxon>
        <taxon>Actinomycetes</taxon>
        <taxon>Mycobacteriales</taxon>
        <taxon>Mycobacteriaceae</taxon>
        <taxon>Mycobacterium</taxon>
    </lineage>
</organism>
<reference key="1">
    <citation type="journal article" date="2001" name="Nature">
        <title>Massive gene decay in the leprosy bacillus.</title>
        <authorList>
            <person name="Cole S.T."/>
            <person name="Eiglmeier K."/>
            <person name="Parkhill J."/>
            <person name="James K.D."/>
            <person name="Thomson N.R."/>
            <person name="Wheeler P.R."/>
            <person name="Honore N."/>
            <person name="Garnier T."/>
            <person name="Churcher C.M."/>
            <person name="Harris D.E."/>
            <person name="Mungall K.L."/>
            <person name="Basham D."/>
            <person name="Brown D."/>
            <person name="Chillingworth T."/>
            <person name="Connor R."/>
            <person name="Davies R.M."/>
            <person name="Devlin K."/>
            <person name="Duthoy S."/>
            <person name="Feltwell T."/>
            <person name="Fraser A."/>
            <person name="Hamlin N."/>
            <person name="Holroyd S."/>
            <person name="Hornsby T."/>
            <person name="Jagels K."/>
            <person name="Lacroix C."/>
            <person name="Maclean J."/>
            <person name="Moule S."/>
            <person name="Murphy L.D."/>
            <person name="Oliver K."/>
            <person name="Quail M.A."/>
            <person name="Rajandream M.A."/>
            <person name="Rutherford K.M."/>
            <person name="Rutter S."/>
            <person name="Seeger K."/>
            <person name="Simon S."/>
            <person name="Simmonds M."/>
            <person name="Skelton J."/>
            <person name="Squares R."/>
            <person name="Squares S."/>
            <person name="Stevens K."/>
            <person name="Taylor K."/>
            <person name="Whitehead S."/>
            <person name="Woodward J.R."/>
            <person name="Barrell B.G."/>
        </authorList>
    </citation>
    <scope>NUCLEOTIDE SEQUENCE [LARGE SCALE GENOMIC DNA]</scope>
    <source>
        <strain>TN</strain>
    </source>
</reference>